<protein>
    <recommendedName>
        <fullName evidence="1">UPF0154 protein SAR1353</fullName>
    </recommendedName>
</protein>
<reference key="1">
    <citation type="journal article" date="2004" name="Proc. Natl. Acad. Sci. U.S.A.">
        <title>Complete genomes of two clinical Staphylococcus aureus strains: evidence for the rapid evolution of virulence and drug resistance.</title>
        <authorList>
            <person name="Holden M.T.G."/>
            <person name="Feil E.J."/>
            <person name="Lindsay J.A."/>
            <person name="Peacock S.J."/>
            <person name="Day N.P.J."/>
            <person name="Enright M.C."/>
            <person name="Foster T.J."/>
            <person name="Moore C.E."/>
            <person name="Hurst L."/>
            <person name="Atkin R."/>
            <person name="Barron A."/>
            <person name="Bason N."/>
            <person name="Bentley S.D."/>
            <person name="Chillingworth C."/>
            <person name="Chillingworth T."/>
            <person name="Churcher C."/>
            <person name="Clark L."/>
            <person name="Corton C."/>
            <person name="Cronin A."/>
            <person name="Doggett J."/>
            <person name="Dowd L."/>
            <person name="Feltwell T."/>
            <person name="Hance Z."/>
            <person name="Harris B."/>
            <person name="Hauser H."/>
            <person name="Holroyd S."/>
            <person name="Jagels K."/>
            <person name="James K.D."/>
            <person name="Lennard N."/>
            <person name="Line A."/>
            <person name="Mayes R."/>
            <person name="Moule S."/>
            <person name="Mungall K."/>
            <person name="Ormond D."/>
            <person name="Quail M.A."/>
            <person name="Rabbinowitsch E."/>
            <person name="Rutherford K.M."/>
            <person name="Sanders M."/>
            <person name="Sharp S."/>
            <person name="Simmonds M."/>
            <person name="Stevens K."/>
            <person name="Whitehead S."/>
            <person name="Barrell B.G."/>
            <person name="Spratt B.G."/>
            <person name="Parkhill J."/>
        </authorList>
    </citation>
    <scope>NUCLEOTIDE SEQUENCE [LARGE SCALE GENOMIC DNA]</scope>
    <source>
        <strain>MRSA252</strain>
    </source>
</reference>
<proteinExistence type="inferred from homology"/>
<sequence length="80" mass="9320">MATWLAIIFIVAALILGLIGGFLLARKYMMDYLKKNPPINEEMLRMMMMQMGQKPSQKKINQMMTMMNKNMDQNMKSAKK</sequence>
<keyword id="KW-0472">Membrane</keyword>
<keyword id="KW-0812">Transmembrane</keyword>
<keyword id="KW-1133">Transmembrane helix</keyword>
<organism>
    <name type="scientific">Staphylococcus aureus (strain MRSA252)</name>
    <dbReference type="NCBI Taxonomy" id="282458"/>
    <lineage>
        <taxon>Bacteria</taxon>
        <taxon>Bacillati</taxon>
        <taxon>Bacillota</taxon>
        <taxon>Bacilli</taxon>
        <taxon>Bacillales</taxon>
        <taxon>Staphylococcaceae</taxon>
        <taxon>Staphylococcus</taxon>
    </lineage>
</organism>
<evidence type="ECO:0000255" key="1">
    <source>
        <dbReference type="HAMAP-Rule" id="MF_00363"/>
    </source>
</evidence>
<name>Y1353_STAAR</name>
<feature type="chain" id="PRO_0000214976" description="UPF0154 protein SAR1353">
    <location>
        <begin position="1"/>
        <end position="80"/>
    </location>
</feature>
<feature type="transmembrane region" description="Helical" evidence="1">
    <location>
        <begin position="4"/>
        <end position="26"/>
    </location>
</feature>
<comment type="subcellular location">
    <subcellularLocation>
        <location evidence="1">Membrane</location>
        <topology evidence="1">Single-pass membrane protein</topology>
    </subcellularLocation>
</comment>
<comment type="similarity">
    <text evidence="1">Belongs to the UPF0154 family.</text>
</comment>
<accession>Q6GH63</accession>
<gene>
    <name type="ordered locus">SAR1353</name>
</gene>
<dbReference type="EMBL" id="BX571856">
    <property type="protein sequence ID" value="CAG40352.1"/>
    <property type="molecule type" value="Genomic_DNA"/>
</dbReference>
<dbReference type="RefSeq" id="WP_000246909.1">
    <property type="nucleotide sequence ID" value="NC_002952.2"/>
</dbReference>
<dbReference type="SMR" id="Q6GH63"/>
<dbReference type="KEGG" id="sar:SAR1353"/>
<dbReference type="HOGENOM" id="CLU_180108_0_1_9"/>
<dbReference type="Proteomes" id="UP000000596">
    <property type="component" value="Chromosome"/>
</dbReference>
<dbReference type="GO" id="GO:0005886">
    <property type="term" value="C:plasma membrane"/>
    <property type="evidence" value="ECO:0007669"/>
    <property type="project" value="UniProtKB-UniRule"/>
</dbReference>
<dbReference type="Gene3D" id="1.10.238.10">
    <property type="entry name" value="EF-hand"/>
    <property type="match status" value="1"/>
</dbReference>
<dbReference type="HAMAP" id="MF_00363">
    <property type="entry name" value="UPF0154"/>
    <property type="match status" value="1"/>
</dbReference>
<dbReference type="InterPro" id="IPR011992">
    <property type="entry name" value="EF-hand-dom_pair"/>
</dbReference>
<dbReference type="InterPro" id="IPR005359">
    <property type="entry name" value="UPF0154"/>
</dbReference>
<dbReference type="Pfam" id="PF03672">
    <property type="entry name" value="UPF0154"/>
    <property type="match status" value="1"/>
</dbReference>
<dbReference type="SUPFAM" id="SSF47473">
    <property type="entry name" value="EF-hand"/>
    <property type="match status" value="1"/>
</dbReference>